<protein>
    <recommendedName>
        <fullName evidence="1">Eukaryotic translation initiation factor 3 subunit I</fullName>
        <shortName evidence="1">eIF3i</shortName>
    </recommendedName>
</protein>
<comment type="function">
    <text evidence="1">Component of the eukaryotic translation initiation factor 3 (eIF-3) complex, which is involved in protein synthesis of a specialized repertoire of mRNAs and, together with other initiation factors, stimulates binding of mRNA and methionyl-tRNAi to the 40S ribosome. The eIF-3 complex specifically targets and initiates translation of a subset of mRNAs involved in cell proliferation.</text>
</comment>
<comment type="subunit">
    <text evidence="1">Component of the eukaryotic translation initiation factor 3 (eIF-3) complex.</text>
</comment>
<comment type="subcellular location">
    <subcellularLocation>
        <location evidence="1">Cytoplasm</location>
    </subcellularLocation>
</comment>
<comment type="similarity">
    <text evidence="1">Belongs to the eIF-3 subunit I family.</text>
</comment>
<gene>
    <name type="ORF">v1g239264</name>
</gene>
<accession>A7RM20</accession>
<proteinExistence type="inferred from homology"/>
<dbReference type="EMBL" id="DS469519">
    <property type="protein sequence ID" value="EDO47524.1"/>
    <property type="molecule type" value="Genomic_DNA"/>
</dbReference>
<dbReference type="SMR" id="A7RM20"/>
<dbReference type="FunCoup" id="A7RM20">
    <property type="interactions" value="695"/>
</dbReference>
<dbReference type="STRING" id="45351.A7RM20"/>
<dbReference type="EnsemblMetazoa" id="EDO47524">
    <property type="protein sequence ID" value="EDO47524"/>
    <property type="gene ID" value="NEMVEDRAFT_v1g239264"/>
</dbReference>
<dbReference type="KEGG" id="nve:5519702"/>
<dbReference type="eggNOG" id="KOG0643">
    <property type="taxonomic scope" value="Eukaryota"/>
</dbReference>
<dbReference type="HOGENOM" id="CLU_043845_0_0_1"/>
<dbReference type="InParanoid" id="A7RM20"/>
<dbReference type="OMA" id="VWFSHNG"/>
<dbReference type="OrthoDB" id="24966at2759"/>
<dbReference type="PhylomeDB" id="A7RM20"/>
<dbReference type="Proteomes" id="UP000001593">
    <property type="component" value="Unassembled WGS sequence"/>
</dbReference>
<dbReference type="GO" id="GO:0016282">
    <property type="term" value="C:eukaryotic 43S preinitiation complex"/>
    <property type="evidence" value="ECO:0007669"/>
    <property type="project" value="UniProtKB-UniRule"/>
</dbReference>
<dbReference type="GO" id="GO:0033290">
    <property type="term" value="C:eukaryotic 48S preinitiation complex"/>
    <property type="evidence" value="ECO:0007669"/>
    <property type="project" value="UniProtKB-UniRule"/>
</dbReference>
<dbReference type="GO" id="GO:0071541">
    <property type="term" value="C:eukaryotic translation initiation factor 3 complex, eIF3m"/>
    <property type="evidence" value="ECO:0000318"/>
    <property type="project" value="GO_Central"/>
</dbReference>
<dbReference type="GO" id="GO:0003723">
    <property type="term" value="F:RNA binding"/>
    <property type="evidence" value="ECO:0000318"/>
    <property type="project" value="GO_Central"/>
</dbReference>
<dbReference type="GO" id="GO:0003743">
    <property type="term" value="F:translation initiation factor activity"/>
    <property type="evidence" value="ECO:0000318"/>
    <property type="project" value="GO_Central"/>
</dbReference>
<dbReference type="GO" id="GO:0002183">
    <property type="term" value="P:cytoplasmic translational initiation"/>
    <property type="evidence" value="ECO:0000318"/>
    <property type="project" value="GO_Central"/>
</dbReference>
<dbReference type="GO" id="GO:0001732">
    <property type="term" value="P:formation of cytoplasmic translation initiation complex"/>
    <property type="evidence" value="ECO:0007669"/>
    <property type="project" value="UniProtKB-UniRule"/>
</dbReference>
<dbReference type="FunFam" id="2.130.10.10:FF:000127">
    <property type="entry name" value="Eukaryotic translation initiation factor 3 subunit I"/>
    <property type="match status" value="1"/>
</dbReference>
<dbReference type="Gene3D" id="2.130.10.10">
    <property type="entry name" value="YVTN repeat-like/Quinoprotein amine dehydrogenase"/>
    <property type="match status" value="1"/>
</dbReference>
<dbReference type="HAMAP" id="MF_03008">
    <property type="entry name" value="eIF3i"/>
    <property type="match status" value="1"/>
</dbReference>
<dbReference type="InterPro" id="IPR027525">
    <property type="entry name" value="eIF3i"/>
</dbReference>
<dbReference type="InterPro" id="IPR015943">
    <property type="entry name" value="WD40/YVTN_repeat-like_dom_sf"/>
</dbReference>
<dbReference type="InterPro" id="IPR036322">
    <property type="entry name" value="WD40_repeat_dom_sf"/>
</dbReference>
<dbReference type="InterPro" id="IPR001680">
    <property type="entry name" value="WD40_rpt"/>
</dbReference>
<dbReference type="PANTHER" id="PTHR19877">
    <property type="entry name" value="EUKARYOTIC TRANSLATION INITIATION FACTOR 3 SUBUNIT I"/>
    <property type="match status" value="1"/>
</dbReference>
<dbReference type="PANTHER" id="PTHR19877:SF1">
    <property type="entry name" value="EUKARYOTIC TRANSLATION INITIATION FACTOR 3 SUBUNIT I"/>
    <property type="match status" value="1"/>
</dbReference>
<dbReference type="Pfam" id="PF24805">
    <property type="entry name" value="EIF3I"/>
    <property type="match status" value="1"/>
</dbReference>
<dbReference type="SMART" id="SM00320">
    <property type="entry name" value="WD40"/>
    <property type="match status" value="6"/>
</dbReference>
<dbReference type="SUPFAM" id="SSF50978">
    <property type="entry name" value="WD40 repeat-like"/>
    <property type="match status" value="1"/>
</dbReference>
<dbReference type="PROSITE" id="PS50082">
    <property type="entry name" value="WD_REPEATS_2"/>
    <property type="match status" value="4"/>
</dbReference>
<dbReference type="PROSITE" id="PS50294">
    <property type="entry name" value="WD_REPEATS_REGION"/>
    <property type="match status" value="2"/>
</dbReference>
<evidence type="ECO:0000255" key="1">
    <source>
        <dbReference type="HAMAP-Rule" id="MF_03008"/>
    </source>
</evidence>
<reference key="1">
    <citation type="journal article" date="2007" name="Science">
        <title>Sea anemone genome reveals ancestral eumetazoan gene repertoire and genomic organization.</title>
        <authorList>
            <person name="Putnam N.H."/>
            <person name="Srivastava M."/>
            <person name="Hellsten U."/>
            <person name="Dirks B."/>
            <person name="Chapman J."/>
            <person name="Salamov A."/>
            <person name="Terry A."/>
            <person name="Shapiro H."/>
            <person name="Lindquist E."/>
            <person name="Kapitonov V.V."/>
            <person name="Jurka J."/>
            <person name="Genikhovich G."/>
            <person name="Grigoriev I.V."/>
            <person name="Lucas S.M."/>
            <person name="Steele R.E."/>
            <person name="Finnerty J.R."/>
            <person name="Technau U."/>
            <person name="Martindale M.Q."/>
            <person name="Rokhsar D.S."/>
        </authorList>
    </citation>
    <scope>NUCLEOTIDE SEQUENCE [LARGE SCALE GENOMIC DNA]</scope>
    <source>
        <strain>CH2 X CH6</strain>
    </source>
</reference>
<organism>
    <name type="scientific">Nematostella vectensis</name>
    <name type="common">Starlet sea anemone</name>
    <dbReference type="NCBI Taxonomy" id="45351"/>
    <lineage>
        <taxon>Eukaryota</taxon>
        <taxon>Metazoa</taxon>
        <taxon>Cnidaria</taxon>
        <taxon>Anthozoa</taxon>
        <taxon>Hexacorallia</taxon>
        <taxon>Actiniaria</taxon>
        <taxon>Edwardsiidae</taxon>
        <taxon>Nematostella</taxon>
    </lineage>
</organism>
<keyword id="KW-0963">Cytoplasm</keyword>
<keyword id="KW-0396">Initiation factor</keyword>
<keyword id="KW-0648">Protein biosynthesis</keyword>
<keyword id="KW-1185">Reference proteome</keyword>
<keyword id="KW-0677">Repeat</keyword>
<keyword id="KW-0853">WD repeat</keyword>
<name>EIF3I_NEMVE</name>
<feature type="chain" id="PRO_0000365353" description="Eukaryotic translation initiation factor 3 subunit I">
    <location>
        <begin position="1"/>
        <end position="321"/>
    </location>
</feature>
<feature type="repeat" description="WD 1">
    <location>
        <begin position="8"/>
        <end position="47"/>
    </location>
</feature>
<feature type="repeat" description="WD 2">
    <location>
        <begin position="50"/>
        <end position="89"/>
    </location>
</feature>
<feature type="repeat" description="WD 3">
    <location>
        <begin position="140"/>
        <end position="179"/>
    </location>
</feature>
<feature type="repeat" description="WD 4">
    <location>
        <begin position="182"/>
        <end position="221"/>
    </location>
</feature>
<feature type="repeat" description="WD 5">
    <location>
        <begin position="279"/>
        <end position="318"/>
    </location>
</feature>
<sequence>MKPLALHGHERNITQIKYNRMGDLLFSAAKDTRPTVWYSLNGERLGTYNGHGGAVWCIDVNYDTTQFISGGADNCLRLWDCEKGVTLSKIETKSAVRTCGFSYGGNEIMLSTDRQMGQSCRILIFDVRDNMESPILTIPVDNSKVTAGLWGPLDQFLVTGHENGELCQWDVKSGNKLISVQEHSKQINDIQMYKDSTMFVTASKDTTAKLFDTDSLRHLKTYKTDRPVNSAALSPIKDHVVVGGGQEAMEVTTTSTRVGKFDARFFHVVFEEEIGRVKGHFGPINSLAFHPDGRSYSSGGEDGYVRIHSFDPSYDDIEFEY</sequence>